<reference key="1">
    <citation type="journal article" date="1987" name="Virology">
        <title>Sequence analysis of the bovine coronavirus nucleocapsid and matrix protein genes.</title>
        <authorList>
            <person name="Lapps W.E."/>
            <person name="Hogue B.G."/>
            <person name="Brian D.A."/>
        </authorList>
    </citation>
    <scope>NUCLEOTIDE SEQUENCE [GENOMIC RNA]</scope>
</reference>
<evidence type="ECO:0000250" key="1">
    <source>
        <dbReference type="UniProtKB" id="P0DTC9"/>
    </source>
</evidence>
<evidence type="ECO:0000255" key="2">
    <source>
        <dbReference type="HAMAP-Rule" id="MF_04096"/>
    </source>
</evidence>
<evidence type="ECO:0000255" key="3">
    <source>
        <dbReference type="PROSITE-ProRule" id="PRU01276"/>
    </source>
</evidence>
<evidence type="ECO:0000255" key="4">
    <source>
        <dbReference type="PROSITE-ProRule" id="PRU01277"/>
    </source>
</evidence>
<evidence type="ECO:0000256" key="5">
    <source>
        <dbReference type="SAM" id="MobiDB-lite"/>
    </source>
</evidence>
<name>NCAP_CVBM</name>
<comment type="function">
    <text evidence="2">Packages the positive strand viral genome RNA into a helical ribonucleocapsid (RNP) and plays a fundamental role during virion assembly through its interactions with the viral genome and membrane protein M. Plays an important role in enhancing the efficiency of subgenomic viral RNA transcription as well as viral replication.</text>
</comment>
<comment type="subunit">
    <text evidence="2">Homooligomer. Both monomeric and oligomeric forms interact with RNA. Interacts with protein M. Interacts with NSP3; this interaction serves to tether the genome to the newly translated replicase-transcriptase complex at a very early stage of infection.</text>
</comment>
<comment type="interaction">
    <interactant intactId="EBI-25649748">
        <id>P10527</id>
    </interactant>
    <interactant intactId="EBI-352013">
        <id>P11940-1</id>
        <label>PABPC1</label>
    </interactant>
    <organismsDiffer>true</organismsDiffer>
    <experiments>3</experiments>
</comment>
<comment type="subcellular location">
    <subcellularLocation>
        <location evidence="2">Virion</location>
    </subcellularLocation>
    <subcellularLocation>
        <location evidence="2">Host endoplasmic reticulum-Golgi intermediate compartment</location>
    </subcellularLocation>
    <subcellularLocation>
        <location evidence="2">Host Golgi apparatus</location>
    </subcellularLocation>
    <text evidence="2">Located inside the virion, complexed with the viral RNA. Probably associates with ER-derived membranes where it participates in viral RNA synthesis and virus budding.</text>
</comment>
<comment type="PTM">
    <text evidence="2">ADP-ribosylated. The ADP-ribosylation is retained in the virion during infection.</text>
</comment>
<comment type="PTM">
    <text evidence="2">Phosphorylated on serine and threonine residues.</text>
</comment>
<comment type="similarity">
    <text evidence="2">Belongs to the betacoronavirus nucleocapsid protein family.</text>
</comment>
<organismHost>
    <name type="scientific">Bos taurus</name>
    <name type="common">Bovine</name>
    <dbReference type="NCBI Taxonomy" id="9913"/>
</organismHost>
<proteinExistence type="evidence at protein level"/>
<protein>
    <recommendedName>
        <fullName evidence="2">Nucleoprotein</fullName>
    </recommendedName>
    <alternativeName>
        <fullName evidence="2">Nucleocapsid protein</fullName>
        <shortName evidence="2">NC</shortName>
        <shortName evidence="2">Protein N</shortName>
    </alternativeName>
</protein>
<accession>P10527</accession>
<keyword id="KW-0013">ADP-ribosylation</keyword>
<keyword id="KW-1040">Host Golgi apparatus</keyword>
<keyword id="KW-0597">Phosphoprotein</keyword>
<keyword id="KW-0687">Ribonucleoprotein</keyword>
<keyword id="KW-0694">RNA-binding</keyword>
<keyword id="KW-0804">Transcription</keyword>
<keyword id="KW-0805">Transcription regulation</keyword>
<keyword id="KW-0543">Viral nucleoprotein</keyword>
<keyword id="KW-0946">Virion</keyword>
<gene>
    <name evidence="2" type="primary">N</name>
    <name type="ORF">7a</name>
</gene>
<sequence length="448" mass="49374">MSFTPGKQSSSRASFGNRSGNGILKWADQSDQSRNVQTRGRRAQPKQTATSQLPSGGNVVPYYSWFSGITQFQKGKEFEFAEGQGVPIAPGVPATEAKGYWYRHNRRSFKTADGNQRQLLPRWYFYYLGTGPHAKDQYGTDIDGVFWVASNQADVNTPADILDRDPSSDEAIPTRFPPGTVLPQGYYIEGSGRSAPNSRSTSRASSRASSAGSRSRANSGNRTPTSGVTPDMADQIASLVLAKLGKDATKPQQVTKQTAKEIRQKILNKPRQKRSPNKQCTVQQCFGKRGPNQNFGGGEMLKLGTSDPQFPILAELAPTAGAFFFGSRLELAKVQNLSGNLDEPQKDVYELRYNGAIRFDSTLSGFETIMKVLNENLNAYQQQDGMMNMSPKPQRQRGQKNGQGENDNISVAAPKSRVQQNKSRELTAEDISLLKKMDEPYTEDTSEI</sequence>
<dbReference type="EMBL" id="U00735">
    <property type="protein sequence ID" value="AAA66397.1"/>
    <property type="molecule type" value="Genomic_RNA"/>
</dbReference>
<dbReference type="PIR" id="B26347">
    <property type="entry name" value="VHIHBC"/>
</dbReference>
<dbReference type="SMR" id="P10527"/>
<dbReference type="IntAct" id="P10527">
    <property type="interactions" value="2"/>
</dbReference>
<dbReference type="Proteomes" id="UP000007554">
    <property type="component" value="Genome"/>
</dbReference>
<dbReference type="GO" id="GO:0044172">
    <property type="term" value="C:host cell endoplasmic reticulum-Golgi intermediate compartment"/>
    <property type="evidence" value="ECO:0007669"/>
    <property type="project" value="UniProtKB-SubCell"/>
</dbReference>
<dbReference type="GO" id="GO:0044177">
    <property type="term" value="C:host cell Golgi apparatus"/>
    <property type="evidence" value="ECO:0007669"/>
    <property type="project" value="UniProtKB-SubCell"/>
</dbReference>
<dbReference type="GO" id="GO:1990904">
    <property type="term" value="C:ribonucleoprotein complex"/>
    <property type="evidence" value="ECO:0007669"/>
    <property type="project" value="UniProtKB-KW"/>
</dbReference>
<dbReference type="GO" id="GO:0019013">
    <property type="term" value="C:viral nucleocapsid"/>
    <property type="evidence" value="ECO:0007669"/>
    <property type="project" value="UniProtKB-UniRule"/>
</dbReference>
<dbReference type="GO" id="GO:0003723">
    <property type="term" value="F:RNA binding"/>
    <property type="evidence" value="ECO:0007669"/>
    <property type="project" value="UniProtKB-UniRule"/>
</dbReference>
<dbReference type="CDD" id="cd21595">
    <property type="entry name" value="CoV_N-CTD"/>
    <property type="match status" value="1"/>
</dbReference>
<dbReference type="CDD" id="cd21554">
    <property type="entry name" value="CoV_N-NTD"/>
    <property type="match status" value="1"/>
</dbReference>
<dbReference type="HAMAP" id="MF_04096">
    <property type="entry name" value="BETA_CORONA_NCAP"/>
    <property type="match status" value="1"/>
</dbReference>
<dbReference type="InterPro" id="IPR044344">
    <property type="entry name" value="N_prot_C_CoV"/>
</dbReference>
<dbReference type="InterPro" id="IPR044345">
    <property type="entry name" value="N_prot_N_CoV"/>
</dbReference>
<dbReference type="InterPro" id="IPR043505">
    <property type="entry name" value="NCAP_bCoV"/>
</dbReference>
<dbReference type="InterPro" id="IPR001218">
    <property type="entry name" value="Nucleocap_CoV"/>
</dbReference>
<dbReference type="InterPro" id="IPR037179">
    <property type="entry name" value="Nucleocapsid_C"/>
</dbReference>
<dbReference type="InterPro" id="IPR037195">
    <property type="entry name" value="Nucleocapsid_N"/>
</dbReference>
<dbReference type="Pfam" id="PF00937">
    <property type="entry name" value="CoV_nucleocap"/>
    <property type="match status" value="1"/>
</dbReference>
<dbReference type="PIRSF" id="PIRSF003888">
    <property type="entry name" value="Corona_nucleocap"/>
    <property type="match status" value="1"/>
</dbReference>
<dbReference type="SUPFAM" id="SSF110304">
    <property type="entry name" value="Coronavirus RNA-binding domain"/>
    <property type="match status" value="1"/>
</dbReference>
<dbReference type="SUPFAM" id="SSF103068">
    <property type="entry name" value="Nucleocapsid protein dimerization domain"/>
    <property type="match status" value="1"/>
</dbReference>
<dbReference type="PROSITE" id="PS51929">
    <property type="entry name" value="COV_N_CTD"/>
    <property type="match status" value="1"/>
</dbReference>
<dbReference type="PROSITE" id="PS51928">
    <property type="entry name" value="COV_N_NTD"/>
    <property type="match status" value="1"/>
</dbReference>
<feature type="chain" id="PRO_0000105994" description="Nucleoprotein">
    <location>
        <begin position="1"/>
        <end position="448"/>
    </location>
</feature>
<feature type="domain" description="CoV N NTD" evidence="3">
    <location>
        <begin position="61"/>
        <end position="190"/>
    </location>
</feature>
<feature type="domain" description="CoV N CTD" evidence="4">
    <location>
        <begin position="259"/>
        <end position="384"/>
    </location>
</feature>
<feature type="region of interest" description="Disordered" evidence="5">
    <location>
        <begin position="1"/>
        <end position="55"/>
    </location>
</feature>
<feature type="region of interest" description="RNA-binding" evidence="2">
    <location>
        <begin position="52"/>
        <end position="194"/>
    </location>
</feature>
<feature type="region of interest" description="Disordered" evidence="5">
    <location>
        <begin position="157"/>
        <end position="231"/>
    </location>
</feature>
<feature type="region of interest" description="Dimerization" evidence="2">
    <location>
        <begin position="266"/>
        <end position="384"/>
    </location>
</feature>
<feature type="region of interest" description="Disordered" evidence="5">
    <location>
        <begin position="266"/>
        <end position="297"/>
    </location>
</feature>
<feature type="region of interest" description="Disordered" evidence="5">
    <location>
        <begin position="385"/>
        <end position="448"/>
    </location>
</feature>
<feature type="compositionally biased region" description="Polar residues" evidence="5">
    <location>
        <begin position="1"/>
        <end position="20"/>
    </location>
</feature>
<feature type="compositionally biased region" description="Polar residues" evidence="5">
    <location>
        <begin position="29"/>
        <end position="38"/>
    </location>
</feature>
<feature type="compositionally biased region" description="Polar residues" evidence="5">
    <location>
        <begin position="45"/>
        <end position="55"/>
    </location>
</feature>
<feature type="compositionally biased region" description="Low complexity" evidence="5">
    <location>
        <begin position="193"/>
        <end position="223"/>
    </location>
</feature>
<feature type="compositionally biased region" description="Basic residues" evidence="5">
    <location>
        <begin position="266"/>
        <end position="276"/>
    </location>
</feature>
<feature type="compositionally biased region" description="Polar residues" evidence="5">
    <location>
        <begin position="399"/>
        <end position="409"/>
    </location>
</feature>
<feature type="compositionally biased region" description="Basic and acidic residues" evidence="5">
    <location>
        <begin position="422"/>
        <end position="439"/>
    </location>
</feature>
<feature type="binding site" evidence="1">
    <location>
        <position position="106"/>
    </location>
    <ligand>
        <name>RNA</name>
        <dbReference type="ChEBI" id="CHEBI:33697"/>
    </ligand>
</feature>
<feature type="binding site" evidence="1">
    <location>
        <position position="122"/>
    </location>
    <ligand>
        <name>RNA</name>
        <dbReference type="ChEBI" id="CHEBI:33697"/>
    </ligand>
</feature>
<feature type="binding site" evidence="1">
    <location>
        <position position="164"/>
    </location>
    <ligand>
        <name>RNA</name>
        <dbReference type="ChEBI" id="CHEBI:33697"/>
    </ligand>
</feature>
<feature type="modified residue" description="Phosphoserine; by host" evidence="2">
    <location>
        <position position="167"/>
    </location>
</feature>
<feature type="modified residue" description="Phosphothreonine; by host" evidence="2">
    <location>
        <position position="174"/>
    </location>
</feature>
<feature type="modified residue" description="Phosphoserine; by host" evidence="2">
    <location>
        <position position="191"/>
    </location>
</feature>
<feature type="modified residue" description="Phosphoserine; by host" evidence="2">
    <location>
        <position position="390"/>
    </location>
</feature>
<feature type="modified residue" description="Phosphoserine; by host" evidence="2">
    <location>
        <position position="423"/>
    </location>
</feature>
<feature type="modified residue" description="Phosphothreonine; by host" evidence="2">
    <location>
        <position position="427"/>
    </location>
</feature>
<organism>
    <name type="scientific">Bovine coronavirus (strain Mebus)</name>
    <name type="common">BCoV</name>
    <name type="synonym">BCV</name>
    <dbReference type="NCBI Taxonomy" id="11132"/>
    <lineage>
        <taxon>Viruses</taxon>
        <taxon>Riboviria</taxon>
        <taxon>Orthornavirae</taxon>
        <taxon>Pisuviricota</taxon>
        <taxon>Pisoniviricetes</taxon>
        <taxon>Nidovirales</taxon>
        <taxon>Cornidovirineae</taxon>
        <taxon>Coronaviridae</taxon>
        <taxon>Orthocoronavirinae</taxon>
        <taxon>Betacoronavirus</taxon>
        <taxon>Embecovirus</taxon>
        <taxon>Betacoronavirus 1</taxon>
    </lineage>
</organism>